<feature type="chain" id="PRO_0000325125" description="Shikimate dehydrogenase (NADP(+))">
    <location>
        <begin position="1"/>
        <end position="279"/>
    </location>
</feature>
<feature type="active site" description="Proton acceptor" evidence="1">
    <location>
        <position position="68"/>
    </location>
</feature>
<feature type="binding site" evidence="1">
    <location>
        <begin position="17"/>
        <end position="19"/>
    </location>
    <ligand>
        <name>shikimate</name>
        <dbReference type="ChEBI" id="CHEBI:36208"/>
    </ligand>
</feature>
<feature type="binding site" evidence="1">
    <location>
        <position position="64"/>
    </location>
    <ligand>
        <name>shikimate</name>
        <dbReference type="ChEBI" id="CHEBI:36208"/>
    </ligand>
</feature>
<feature type="binding site" evidence="1">
    <location>
        <position position="80"/>
    </location>
    <ligand>
        <name>NADP(+)</name>
        <dbReference type="ChEBI" id="CHEBI:58349"/>
    </ligand>
</feature>
<feature type="binding site" evidence="1">
    <location>
        <position position="89"/>
    </location>
    <ligand>
        <name>shikimate</name>
        <dbReference type="ChEBI" id="CHEBI:36208"/>
    </ligand>
</feature>
<feature type="binding site" evidence="1">
    <location>
        <position position="105"/>
    </location>
    <ligand>
        <name>shikimate</name>
        <dbReference type="ChEBI" id="CHEBI:36208"/>
    </ligand>
</feature>
<feature type="binding site" evidence="1">
    <location>
        <begin position="129"/>
        <end position="133"/>
    </location>
    <ligand>
        <name>NADP(+)</name>
        <dbReference type="ChEBI" id="CHEBI:58349"/>
    </ligand>
</feature>
<feature type="binding site" evidence="1">
    <location>
        <begin position="153"/>
        <end position="158"/>
    </location>
    <ligand>
        <name>NADP(+)</name>
        <dbReference type="ChEBI" id="CHEBI:58349"/>
    </ligand>
</feature>
<feature type="binding site" evidence="1">
    <location>
        <position position="221"/>
    </location>
    <ligand>
        <name>NADP(+)</name>
        <dbReference type="ChEBI" id="CHEBI:58349"/>
    </ligand>
</feature>
<feature type="binding site" evidence="1">
    <location>
        <position position="223"/>
    </location>
    <ligand>
        <name>shikimate</name>
        <dbReference type="ChEBI" id="CHEBI:36208"/>
    </ligand>
</feature>
<feature type="binding site" evidence="1">
    <location>
        <position position="245"/>
    </location>
    <ligand>
        <name>NADP(+)</name>
        <dbReference type="ChEBI" id="CHEBI:58349"/>
    </ligand>
</feature>
<accession>Q5QXJ3</accession>
<name>AROE_IDILO</name>
<sequence>MKSVTSLGVFGNPIAHSLSPRIHALFAQTRQDSINYQRYLSTPGHFPRRVAEFFRHGGQGANVTLPFKQQAASLVTKLSDRARLAGAVNTLIPYGNGLLLGDNTDGEGLIIDLKNKGLNVSERSLAVFGAGGSARGIIPLLLEQKPRCLYLVNRTAKKAEMLKSQLETLGLVAANRIQVRSSASEIDEPIDLLINATSSSLNGQRLTLPPLLSENASGYDLMYADQPTVFMEQLTQAGCKNVSDGFGMLIEQAASSYQLWMGDERPDTAFVMAEMRTPS</sequence>
<organism>
    <name type="scientific">Idiomarina loihiensis (strain ATCC BAA-735 / DSM 15497 / L2-TR)</name>
    <dbReference type="NCBI Taxonomy" id="283942"/>
    <lineage>
        <taxon>Bacteria</taxon>
        <taxon>Pseudomonadati</taxon>
        <taxon>Pseudomonadota</taxon>
        <taxon>Gammaproteobacteria</taxon>
        <taxon>Alteromonadales</taxon>
        <taxon>Idiomarinaceae</taxon>
        <taxon>Idiomarina</taxon>
    </lineage>
</organism>
<dbReference type="EC" id="1.1.1.25" evidence="1"/>
<dbReference type="EMBL" id="AE017340">
    <property type="protein sequence ID" value="AAV80868.1"/>
    <property type="molecule type" value="Genomic_DNA"/>
</dbReference>
<dbReference type="RefSeq" id="WP_011233288.1">
    <property type="nucleotide sequence ID" value="NC_006512.1"/>
</dbReference>
<dbReference type="SMR" id="Q5QXJ3"/>
<dbReference type="STRING" id="283942.IL0024"/>
<dbReference type="GeneID" id="41335172"/>
<dbReference type="KEGG" id="ilo:IL0024"/>
<dbReference type="eggNOG" id="COG0169">
    <property type="taxonomic scope" value="Bacteria"/>
</dbReference>
<dbReference type="HOGENOM" id="CLU_044063_2_1_6"/>
<dbReference type="OrthoDB" id="9776868at2"/>
<dbReference type="UniPathway" id="UPA00053">
    <property type="reaction ID" value="UER00087"/>
</dbReference>
<dbReference type="Proteomes" id="UP000001171">
    <property type="component" value="Chromosome"/>
</dbReference>
<dbReference type="GO" id="GO:0005829">
    <property type="term" value="C:cytosol"/>
    <property type="evidence" value="ECO:0007669"/>
    <property type="project" value="TreeGrafter"/>
</dbReference>
<dbReference type="GO" id="GO:0050661">
    <property type="term" value="F:NADP binding"/>
    <property type="evidence" value="ECO:0007669"/>
    <property type="project" value="InterPro"/>
</dbReference>
<dbReference type="GO" id="GO:0004764">
    <property type="term" value="F:shikimate 3-dehydrogenase (NADP+) activity"/>
    <property type="evidence" value="ECO:0007669"/>
    <property type="project" value="UniProtKB-UniRule"/>
</dbReference>
<dbReference type="GO" id="GO:0008652">
    <property type="term" value="P:amino acid biosynthetic process"/>
    <property type="evidence" value="ECO:0007669"/>
    <property type="project" value="UniProtKB-KW"/>
</dbReference>
<dbReference type="GO" id="GO:0009073">
    <property type="term" value="P:aromatic amino acid family biosynthetic process"/>
    <property type="evidence" value="ECO:0007669"/>
    <property type="project" value="UniProtKB-KW"/>
</dbReference>
<dbReference type="GO" id="GO:0009423">
    <property type="term" value="P:chorismate biosynthetic process"/>
    <property type="evidence" value="ECO:0007669"/>
    <property type="project" value="UniProtKB-UniRule"/>
</dbReference>
<dbReference type="GO" id="GO:0019632">
    <property type="term" value="P:shikimate metabolic process"/>
    <property type="evidence" value="ECO:0007669"/>
    <property type="project" value="InterPro"/>
</dbReference>
<dbReference type="CDD" id="cd01065">
    <property type="entry name" value="NAD_bind_Shikimate_DH"/>
    <property type="match status" value="1"/>
</dbReference>
<dbReference type="FunFam" id="3.40.50.10860:FF:000006">
    <property type="entry name" value="Shikimate dehydrogenase (NADP(+))"/>
    <property type="match status" value="1"/>
</dbReference>
<dbReference type="Gene3D" id="3.40.50.10860">
    <property type="entry name" value="Leucine Dehydrogenase, chain A, domain 1"/>
    <property type="match status" value="1"/>
</dbReference>
<dbReference type="Gene3D" id="3.40.50.720">
    <property type="entry name" value="NAD(P)-binding Rossmann-like Domain"/>
    <property type="match status" value="1"/>
</dbReference>
<dbReference type="HAMAP" id="MF_00222">
    <property type="entry name" value="Shikimate_DH_AroE"/>
    <property type="match status" value="1"/>
</dbReference>
<dbReference type="InterPro" id="IPR046346">
    <property type="entry name" value="Aminoacid_DH-like_N_sf"/>
</dbReference>
<dbReference type="InterPro" id="IPR036291">
    <property type="entry name" value="NAD(P)-bd_dom_sf"/>
</dbReference>
<dbReference type="InterPro" id="IPR041121">
    <property type="entry name" value="SDH_C"/>
</dbReference>
<dbReference type="InterPro" id="IPR011342">
    <property type="entry name" value="Shikimate_DH"/>
</dbReference>
<dbReference type="InterPro" id="IPR013708">
    <property type="entry name" value="Shikimate_DH-bd_N"/>
</dbReference>
<dbReference type="InterPro" id="IPR022893">
    <property type="entry name" value="Shikimate_DH_fam"/>
</dbReference>
<dbReference type="InterPro" id="IPR006151">
    <property type="entry name" value="Shikm_DH/Glu-tRNA_Rdtase"/>
</dbReference>
<dbReference type="NCBIfam" id="TIGR00507">
    <property type="entry name" value="aroE"/>
    <property type="match status" value="1"/>
</dbReference>
<dbReference type="NCBIfam" id="NF001310">
    <property type="entry name" value="PRK00258.1-2"/>
    <property type="match status" value="1"/>
</dbReference>
<dbReference type="PANTHER" id="PTHR21089:SF1">
    <property type="entry name" value="BIFUNCTIONAL 3-DEHYDROQUINATE DEHYDRATASE_SHIKIMATE DEHYDROGENASE, CHLOROPLASTIC"/>
    <property type="match status" value="1"/>
</dbReference>
<dbReference type="PANTHER" id="PTHR21089">
    <property type="entry name" value="SHIKIMATE DEHYDROGENASE"/>
    <property type="match status" value="1"/>
</dbReference>
<dbReference type="Pfam" id="PF18317">
    <property type="entry name" value="SDH_C"/>
    <property type="match status" value="1"/>
</dbReference>
<dbReference type="Pfam" id="PF01488">
    <property type="entry name" value="Shikimate_DH"/>
    <property type="match status" value="1"/>
</dbReference>
<dbReference type="Pfam" id="PF08501">
    <property type="entry name" value="Shikimate_dh_N"/>
    <property type="match status" value="1"/>
</dbReference>
<dbReference type="SUPFAM" id="SSF53223">
    <property type="entry name" value="Aminoacid dehydrogenase-like, N-terminal domain"/>
    <property type="match status" value="1"/>
</dbReference>
<dbReference type="SUPFAM" id="SSF51735">
    <property type="entry name" value="NAD(P)-binding Rossmann-fold domains"/>
    <property type="match status" value="1"/>
</dbReference>
<proteinExistence type="inferred from homology"/>
<evidence type="ECO:0000255" key="1">
    <source>
        <dbReference type="HAMAP-Rule" id="MF_00222"/>
    </source>
</evidence>
<reference key="1">
    <citation type="journal article" date="2004" name="Proc. Natl. Acad. Sci. U.S.A.">
        <title>Genome sequence of the deep-sea gamma-proteobacterium Idiomarina loihiensis reveals amino acid fermentation as a source of carbon and energy.</title>
        <authorList>
            <person name="Hou S."/>
            <person name="Saw J.H."/>
            <person name="Lee K.S."/>
            <person name="Freitas T.A."/>
            <person name="Belisle C."/>
            <person name="Kawarabayasi Y."/>
            <person name="Donachie S.P."/>
            <person name="Pikina A."/>
            <person name="Galperin M.Y."/>
            <person name="Koonin E.V."/>
            <person name="Makarova K.S."/>
            <person name="Omelchenko M.V."/>
            <person name="Sorokin A."/>
            <person name="Wolf Y.I."/>
            <person name="Li Q.X."/>
            <person name="Keum Y.S."/>
            <person name="Campbell S."/>
            <person name="Denery J."/>
            <person name="Aizawa S."/>
            <person name="Shibata S."/>
            <person name="Malahoff A."/>
            <person name="Alam M."/>
        </authorList>
    </citation>
    <scope>NUCLEOTIDE SEQUENCE [LARGE SCALE GENOMIC DNA]</scope>
    <source>
        <strain>ATCC BAA-735 / DSM 15497 / L2-TR</strain>
    </source>
</reference>
<keyword id="KW-0028">Amino-acid biosynthesis</keyword>
<keyword id="KW-0057">Aromatic amino acid biosynthesis</keyword>
<keyword id="KW-0521">NADP</keyword>
<keyword id="KW-0560">Oxidoreductase</keyword>
<keyword id="KW-1185">Reference proteome</keyword>
<comment type="function">
    <text evidence="1">Involved in the biosynthesis of the chorismate, which leads to the biosynthesis of aromatic amino acids. Catalyzes the reversible NADPH linked reduction of 3-dehydroshikimate (DHSA) to yield shikimate (SA).</text>
</comment>
<comment type="catalytic activity">
    <reaction evidence="1">
        <text>shikimate + NADP(+) = 3-dehydroshikimate + NADPH + H(+)</text>
        <dbReference type="Rhea" id="RHEA:17737"/>
        <dbReference type="ChEBI" id="CHEBI:15378"/>
        <dbReference type="ChEBI" id="CHEBI:16630"/>
        <dbReference type="ChEBI" id="CHEBI:36208"/>
        <dbReference type="ChEBI" id="CHEBI:57783"/>
        <dbReference type="ChEBI" id="CHEBI:58349"/>
        <dbReference type="EC" id="1.1.1.25"/>
    </reaction>
</comment>
<comment type="pathway">
    <text evidence="1">Metabolic intermediate biosynthesis; chorismate biosynthesis; chorismate from D-erythrose 4-phosphate and phosphoenolpyruvate: step 4/7.</text>
</comment>
<comment type="subunit">
    <text evidence="1">Homodimer.</text>
</comment>
<comment type="similarity">
    <text evidence="1">Belongs to the shikimate dehydrogenase family.</text>
</comment>
<gene>
    <name evidence="1" type="primary">aroE</name>
    <name type="ordered locus">IL0024</name>
</gene>
<protein>
    <recommendedName>
        <fullName evidence="1">Shikimate dehydrogenase (NADP(+))</fullName>
        <shortName evidence="1">SDH</shortName>
        <ecNumber evidence="1">1.1.1.25</ecNumber>
    </recommendedName>
</protein>